<organism>
    <name type="scientific">Arabidopsis thaliana</name>
    <name type="common">Mouse-ear cress</name>
    <dbReference type="NCBI Taxonomy" id="3702"/>
    <lineage>
        <taxon>Eukaryota</taxon>
        <taxon>Viridiplantae</taxon>
        <taxon>Streptophyta</taxon>
        <taxon>Embryophyta</taxon>
        <taxon>Tracheophyta</taxon>
        <taxon>Spermatophyta</taxon>
        <taxon>Magnoliopsida</taxon>
        <taxon>eudicotyledons</taxon>
        <taxon>Gunneridae</taxon>
        <taxon>Pentapetalae</taxon>
        <taxon>rosids</taxon>
        <taxon>malvids</taxon>
        <taxon>Brassicales</taxon>
        <taxon>Brassicaceae</taxon>
        <taxon>Camelineae</taxon>
        <taxon>Arabidopsis</taxon>
    </lineage>
</organism>
<evidence type="ECO:0000250" key="1"/>
<evidence type="ECO:0000255" key="2"/>
<evidence type="ECO:0000255" key="3">
    <source>
        <dbReference type="PROSITE-ProRule" id="PRU01134"/>
    </source>
</evidence>
<evidence type="ECO:0000305" key="4"/>
<gene>
    <name type="primary">ACA6</name>
    <name type="ordered locus">At4g21000</name>
    <name type="ORF">T13K14.160</name>
</gene>
<feature type="signal peptide" evidence="2">
    <location>
        <begin position="1"/>
        <end position="28"/>
    </location>
</feature>
<feature type="chain" id="PRO_0000429732" description="Alpha carbonic anhydrase 6">
    <location>
        <begin position="29"/>
        <end position="260"/>
    </location>
</feature>
<feature type="domain" description="Alpha-carbonic anhydrase" evidence="3">
    <location>
        <begin position="35"/>
        <end position="260"/>
    </location>
</feature>
<feature type="active site" description="Proton acceptor" evidence="3">
    <location>
        <position position="100"/>
    </location>
</feature>
<feature type="binding site" evidence="3">
    <location>
        <position position="126"/>
    </location>
    <ligand>
        <name>Zn(2+)</name>
        <dbReference type="ChEBI" id="CHEBI:29105"/>
        <note>catalytic</note>
    </ligand>
</feature>
<feature type="binding site" evidence="3">
    <location>
        <position position="128"/>
    </location>
    <ligand>
        <name>Zn(2+)</name>
        <dbReference type="ChEBI" id="CHEBI:29105"/>
        <note>catalytic</note>
    </ligand>
</feature>
<feature type="binding site" evidence="3">
    <location>
        <position position="145"/>
    </location>
    <ligand>
        <name>Zn(2+)</name>
        <dbReference type="ChEBI" id="CHEBI:29105"/>
        <note>catalytic</note>
    </ligand>
</feature>
<feature type="binding site" evidence="1">
    <location>
        <begin position="211"/>
        <end position="212"/>
    </location>
    <ligand>
        <name>substrate</name>
    </ligand>
</feature>
<feature type="glycosylation site" description="N-linked (GlcNAc...) asparagine" evidence="2">
    <location>
        <position position="136"/>
    </location>
</feature>
<feature type="disulfide bond" evidence="1">
    <location>
        <begin position="60"/>
        <end position="215"/>
    </location>
</feature>
<protein>
    <recommendedName>
        <fullName>Alpha carbonic anhydrase 6</fullName>
        <shortName>AtaCA6</shortName>
        <shortName>AtalphaCA6</shortName>
        <ecNumber>4.2.1.1</ecNumber>
    </recommendedName>
    <alternativeName>
        <fullName>Alpha carbonate dehydratase 6</fullName>
    </alternativeName>
</protein>
<keyword id="KW-0150">Chloroplast</keyword>
<keyword id="KW-1015">Disulfide bond</keyword>
<keyword id="KW-0325">Glycoprotein</keyword>
<keyword id="KW-0456">Lyase</keyword>
<keyword id="KW-0479">Metal-binding</keyword>
<keyword id="KW-0934">Plastid</keyword>
<keyword id="KW-1185">Reference proteome</keyword>
<keyword id="KW-0732">Signal</keyword>
<keyword id="KW-0862">Zinc</keyword>
<name>ATCA6_ARATH</name>
<accession>Q9SUB4</accession>
<sequence length="260" mass="29948">MDANTKTILFFVVFFIDLFSPNILFVYAREIGNKPLFTYKQKTEKGPAEWGKLDPQWKVCSTGKIQSPIDLTDERVSLIHDQALSKHYKPASAVIQSRGHDVMVSWKGDGGKITIHQTDYKLVQCHWHSPSEHTINGTSYDLELHMVHTSASGKTTVVGVLYKLGEPDEFLTKILNGIKGVGKKEIDLGIVDPRDIRFETNNFYRYIGSLTIPPCTEGVIWTVQKRVLYFFCFCYRLIIFVTPYINIFWIFVFVFWCMLM</sequence>
<reference key="1">
    <citation type="journal article" date="1999" name="Nature">
        <title>Sequence and analysis of chromosome 4 of the plant Arabidopsis thaliana.</title>
        <authorList>
            <person name="Mayer K.F.X."/>
            <person name="Schueller C."/>
            <person name="Wambutt R."/>
            <person name="Murphy G."/>
            <person name="Volckaert G."/>
            <person name="Pohl T."/>
            <person name="Duesterhoeft A."/>
            <person name="Stiekema W."/>
            <person name="Entian K.-D."/>
            <person name="Terryn N."/>
            <person name="Harris B."/>
            <person name="Ansorge W."/>
            <person name="Brandt P."/>
            <person name="Grivell L.A."/>
            <person name="Rieger M."/>
            <person name="Weichselgartner M."/>
            <person name="de Simone V."/>
            <person name="Obermaier B."/>
            <person name="Mache R."/>
            <person name="Mueller M."/>
            <person name="Kreis M."/>
            <person name="Delseny M."/>
            <person name="Puigdomenech P."/>
            <person name="Watson M."/>
            <person name="Schmidtheini T."/>
            <person name="Reichert B."/>
            <person name="Portetelle D."/>
            <person name="Perez-Alonso M."/>
            <person name="Boutry M."/>
            <person name="Bancroft I."/>
            <person name="Vos P."/>
            <person name="Hoheisel J."/>
            <person name="Zimmermann W."/>
            <person name="Wedler H."/>
            <person name="Ridley P."/>
            <person name="Langham S.-A."/>
            <person name="McCullagh B."/>
            <person name="Bilham L."/>
            <person name="Robben J."/>
            <person name="van der Schueren J."/>
            <person name="Grymonprez B."/>
            <person name="Chuang Y.-J."/>
            <person name="Vandenbussche F."/>
            <person name="Braeken M."/>
            <person name="Weltjens I."/>
            <person name="Voet M."/>
            <person name="Bastiaens I."/>
            <person name="Aert R."/>
            <person name="Defoor E."/>
            <person name="Weitzenegger T."/>
            <person name="Bothe G."/>
            <person name="Ramsperger U."/>
            <person name="Hilbert H."/>
            <person name="Braun M."/>
            <person name="Holzer E."/>
            <person name="Brandt A."/>
            <person name="Peters S."/>
            <person name="van Staveren M."/>
            <person name="Dirkse W."/>
            <person name="Mooijman P."/>
            <person name="Klein Lankhorst R."/>
            <person name="Rose M."/>
            <person name="Hauf J."/>
            <person name="Koetter P."/>
            <person name="Berneiser S."/>
            <person name="Hempel S."/>
            <person name="Feldpausch M."/>
            <person name="Lamberth S."/>
            <person name="Van den Daele H."/>
            <person name="De Keyser A."/>
            <person name="Buysshaert C."/>
            <person name="Gielen J."/>
            <person name="Villarroel R."/>
            <person name="De Clercq R."/>
            <person name="van Montagu M."/>
            <person name="Rogers J."/>
            <person name="Cronin A."/>
            <person name="Quail M.A."/>
            <person name="Bray-Allen S."/>
            <person name="Clark L."/>
            <person name="Doggett J."/>
            <person name="Hall S."/>
            <person name="Kay M."/>
            <person name="Lennard N."/>
            <person name="McLay K."/>
            <person name="Mayes R."/>
            <person name="Pettett A."/>
            <person name="Rajandream M.A."/>
            <person name="Lyne M."/>
            <person name="Benes V."/>
            <person name="Rechmann S."/>
            <person name="Borkova D."/>
            <person name="Bloecker H."/>
            <person name="Scharfe M."/>
            <person name="Grimm M."/>
            <person name="Loehnert T.-H."/>
            <person name="Dose S."/>
            <person name="de Haan M."/>
            <person name="Maarse A.C."/>
            <person name="Schaefer M."/>
            <person name="Mueller-Auer S."/>
            <person name="Gabel C."/>
            <person name="Fuchs M."/>
            <person name="Fartmann B."/>
            <person name="Granderath K."/>
            <person name="Dauner D."/>
            <person name="Herzl A."/>
            <person name="Neumann S."/>
            <person name="Argiriou A."/>
            <person name="Vitale D."/>
            <person name="Liguori R."/>
            <person name="Piravandi E."/>
            <person name="Massenet O."/>
            <person name="Quigley F."/>
            <person name="Clabauld G."/>
            <person name="Muendlein A."/>
            <person name="Felber R."/>
            <person name="Schnabl S."/>
            <person name="Hiller R."/>
            <person name="Schmidt W."/>
            <person name="Lecharny A."/>
            <person name="Aubourg S."/>
            <person name="Chefdor F."/>
            <person name="Cooke R."/>
            <person name="Berger C."/>
            <person name="Monfort A."/>
            <person name="Casacuberta E."/>
            <person name="Gibbons T."/>
            <person name="Weber N."/>
            <person name="Vandenbol M."/>
            <person name="Bargues M."/>
            <person name="Terol J."/>
            <person name="Torres A."/>
            <person name="Perez-Perez A."/>
            <person name="Purnelle B."/>
            <person name="Bent E."/>
            <person name="Johnson S."/>
            <person name="Tacon D."/>
            <person name="Jesse T."/>
            <person name="Heijnen L."/>
            <person name="Schwarz S."/>
            <person name="Scholler P."/>
            <person name="Heber S."/>
            <person name="Francs P."/>
            <person name="Bielke C."/>
            <person name="Frishman D."/>
            <person name="Haase D."/>
            <person name="Lemcke K."/>
            <person name="Mewes H.-W."/>
            <person name="Stocker S."/>
            <person name="Zaccaria P."/>
            <person name="Bevan M."/>
            <person name="Wilson R.K."/>
            <person name="de la Bastide M."/>
            <person name="Habermann K."/>
            <person name="Parnell L."/>
            <person name="Dedhia N."/>
            <person name="Gnoj L."/>
            <person name="Schutz K."/>
            <person name="Huang E."/>
            <person name="Spiegel L."/>
            <person name="Sekhon M."/>
            <person name="Murray J."/>
            <person name="Sheet P."/>
            <person name="Cordes M."/>
            <person name="Abu-Threideh J."/>
            <person name="Stoneking T."/>
            <person name="Kalicki J."/>
            <person name="Graves T."/>
            <person name="Harmon G."/>
            <person name="Edwards J."/>
            <person name="Latreille P."/>
            <person name="Courtney L."/>
            <person name="Cloud J."/>
            <person name="Abbott A."/>
            <person name="Scott K."/>
            <person name="Johnson D."/>
            <person name="Minx P."/>
            <person name="Bentley D."/>
            <person name="Fulton B."/>
            <person name="Miller N."/>
            <person name="Greco T."/>
            <person name="Kemp K."/>
            <person name="Kramer J."/>
            <person name="Fulton L."/>
            <person name="Mardis E."/>
            <person name="Dante M."/>
            <person name="Pepin K."/>
            <person name="Hillier L.W."/>
            <person name="Nelson J."/>
            <person name="Spieth J."/>
            <person name="Ryan E."/>
            <person name="Andrews S."/>
            <person name="Geisel C."/>
            <person name="Layman D."/>
            <person name="Du H."/>
            <person name="Ali J."/>
            <person name="Berghoff A."/>
            <person name="Jones K."/>
            <person name="Drone K."/>
            <person name="Cotton M."/>
            <person name="Joshu C."/>
            <person name="Antonoiu B."/>
            <person name="Zidanic M."/>
            <person name="Strong C."/>
            <person name="Sun H."/>
            <person name="Lamar B."/>
            <person name="Yordan C."/>
            <person name="Ma P."/>
            <person name="Zhong J."/>
            <person name="Preston R."/>
            <person name="Vil D."/>
            <person name="Shekher M."/>
            <person name="Matero A."/>
            <person name="Shah R."/>
            <person name="Swaby I.K."/>
            <person name="O'Shaughnessy A."/>
            <person name="Rodriguez M."/>
            <person name="Hoffman J."/>
            <person name="Till S."/>
            <person name="Granat S."/>
            <person name="Shohdy N."/>
            <person name="Hasegawa A."/>
            <person name="Hameed A."/>
            <person name="Lodhi M."/>
            <person name="Johnson A."/>
            <person name="Chen E."/>
            <person name="Marra M.A."/>
            <person name="Martienssen R."/>
            <person name="McCombie W.R."/>
        </authorList>
    </citation>
    <scope>NUCLEOTIDE SEQUENCE [LARGE SCALE GENOMIC DNA]</scope>
    <source>
        <strain>cv. Columbia</strain>
    </source>
</reference>
<reference key="2">
    <citation type="journal article" date="2017" name="Plant J.">
        <title>Araport11: a complete reannotation of the Arabidopsis thaliana reference genome.</title>
        <authorList>
            <person name="Cheng C.Y."/>
            <person name="Krishnakumar V."/>
            <person name="Chan A.P."/>
            <person name="Thibaud-Nissen F."/>
            <person name="Schobel S."/>
            <person name="Town C.D."/>
        </authorList>
    </citation>
    <scope>GENOME REANNOTATION</scope>
    <source>
        <strain>cv. Columbia</strain>
    </source>
</reference>
<reference key="3">
    <citation type="journal article" date="2007" name="Plant Cell Environ.">
        <title>Characterization and expression analysis of genes encoding alpha and beta carbonic anhydrases in Arabidopsis.</title>
        <authorList>
            <person name="Fabre N."/>
            <person name="Reiter I.M."/>
            <person name="Becuwe-Linka N."/>
            <person name="Genty B."/>
            <person name="Rumeau D."/>
        </authorList>
    </citation>
    <scope>GENE FAMILY</scope>
    <scope>NOMENCLATURE</scope>
    <source>
        <strain>cv. Columbia</strain>
    </source>
</reference>
<dbReference type="EC" id="4.2.1.1"/>
<dbReference type="EMBL" id="AL080282">
    <property type="protein sequence ID" value="CAB45895.1"/>
    <property type="molecule type" value="Genomic_DNA"/>
</dbReference>
<dbReference type="EMBL" id="AL161554">
    <property type="protein sequence ID" value="CAB79100.1"/>
    <property type="molecule type" value="Genomic_DNA"/>
</dbReference>
<dbReference type="EMBL" id="CP002687">
    <property type="protein sequence ID" value="AEE84386.1"/>
    <property type="molecule type" value="Genomic_DNA"/>
</dbReference>
<dbReference type="PIR" id="T10642">
    <property type="entry name" value="T10642"/>
</dbReference>
<dbReference type="RefSeq" id="NP_193832.1">
    <property type="nucleotide sequence ID" value="NM_118218.1"/>
</dbReference>
<dbReference type="SMR" id="Q9SUB4"/>
<dbReference type="FunCoup" id="Q9SUB4">
    <property type="interactions" value="52"/>
</dbReference>
<dbReference type="STRING" id="3702.Q9SUB4"/>
<dbReference type="GlyCosmos" id="Q9SUB4">
    <property type="glycosylation" value="1 site, No reported glycans"/>
</dbReference>
<dbReference type="GlyGen" id="Q9SUB4">
    <property type="glycosylation" value="1 site"/>
</dbReference>
<dbReference type="PaxDb" id="3702-AT4G21000.1"/>
<dbReference type="EnsemblPlants" id="AT4G21000.1">
    <property type="protein sequence ID" value="AT4G21000.1"/>
    <property type="gene ID" value="AT4G21000"/>
</dbReference>
<dbReference type="GeneID" id="827847"/>
<dbReference type="Gramene" id="AT4G21000.1">
    <property type="protein sequence ID" value="AT4G21000.1"/>
    <property type="gene ID" value="AT4G21000"/>
</dbReference>
<dbReference type="KEGG" id="ath:AT4G21000"/>
<dbReference type="Araport" id="AT4G21000"/>
<dbReference type="TAIR" id="AT4G21000">
    <property type="gene designation" value="ACA6"/>
</dbReference>
<dbReference type="eggNOG" id="KOG0382">
    <property type="taxonomic scope" value="Eukaryota"/>
</dbReference>
<dbReference type="HOGENOM" id="CLU_039326_0_0_1"/>
<dbReference type="InParanoid" id="Q9SUB4"/>
<dbReference type="OMA" id="YSEGVEW"/>
<dbReference type="PhylomeDB" id="Q9SUB4"/>
<dbReference type="BioCyc" id="ARA:AT4G21000-MONOMER"/>
<dbReference type="PRO" id="PR:Q9SUB4"/>
<dbReference type="Proteomes" id="UP000006548">
    <property type="component" value="Chromosome 4"/>
</dbReference>
<dbReference type="ExpressionAtlas" id="Q9SUB4">
    <property type="expression patterns" value="baseline"/>
</dbReference>
<dbReference type="GO" id="GO:0009570">
    <property type="term" value="C:chloroplast stroma"/>
    <property type="evidence" value="ECO:0007669"/>
    <property type="project" value="UniProtKB-SubCell"/>
</dbReference>
<dbReference type="GO" id="GO:0004089">
    <property type="term" value="F:carbonate dehydratase activity"/>
    <property type="evidence" value="ECO:0007669"/>
    <property type="project" value="UniProtKB-EC"/>
</dbReference>
<dbReference type="GO" id="GO:0008270">
    <property type="term" value="F:zinc ion binding"/>
    <property type="evidence" value="ECO:0007669"/>
    <property type="project" value="InterPro"/>
</dbReference>
<dbReference type="CDD" id="cd03124">
    <property type="entry name" value="alpha_CA_prokaryotic_like"/>
    <property type="match status" value="1"/>
</dbReference>
<dbReference type="Gene3D" id="3.10.200.10">
    <property type="entry name" value="Alpha carbonic anhydrase"/>
    <property type="match status" value="1"/>
</dbReference>
<dbReference type="InterPro" id="IPR041891">
    <property type="entry name" value="Alpha_CA_prokaryot-like"/>
</dbReference>
<dbReference type="InterPro" id="IPR001148">
    <property type="entry name" value="CA_dom"/>
</dbReference>
<dbReference type="InterPro" id="IPR036398">
    <property type="entry name" value="CA_dom_sf"/>
</dbReference>
<dbReference type="InterPro" id="IPR023561">
    <property type="entry name" value="Carbonic_anhydrase_a-class"/>
</dbReference>
<dbReference type="InterPro" id="IPR018338">
    <property type="entry name" value="Carbonic_anhydrase_a-class_CS"/>
</dbReference>
<dbReference type="PANTHER" id="PTHR18952:SF271">
    <property type="entry name" value="ALPHA CARBONIC ANHYDRASE 4-RELATED"/>
    <property type="match status" value="1"/>
</dbReference>
<dbReference type="PANTHER" id="PTHR18952">
    <property type="entry name" value="CARBONIC ANHYDRASE"/>
    <property type="match status" value="1"/>
</dbReference>
<dbReference type="Pfam" id="PF00194">
    <property type="entry name" value="Carb_anhydrase"/>
    <property type="match status" value="1"/>
</dbReference>
<dbReference type="SMART" id="SM01057">
    <property type="entry name" value="Carb_anhydrase"/>
    <property type="match status" value="1"/>
</dbReference>
<dbReference type="SUPFAM" id="SSF51069">
    <property type="entry name" value="Carbonic anhydrase"/>
    <property type="match status" value="1"/>
</dbReference>
<dbReference type="PROSITE" id="PS00162">
    <property type="entry name" value="ALPHA_CA_1"/>
    <property type="match status" value="1"/>
</dbReference>
<dbReference type="PROSITE" id="PS51144">
    <property type="entry name" value="ALPHA_CA_2"/>
    <property type="match status" value="1"/>
</dbReference>
<proteinExistence type="inferred from homology"/>
<comment type="function">
    <text evidence="1">Reversible hydration of carbon dioxide.</text>
</comment>
<comment type="catalytic activity">
    <reaction>
        <text>hydrogencarbonate + H(+) = CO2 + H2O</text>
        <dbReference type="Rhea" id="RHEA:10748"/>
        <dbReference type="ChEBI" id="CHEBI:15377"/>
        <dbReference type="ChEBI" id="CHEBI:15378"/>
        <dbReference type="ChEBI" id="CHEBI:16526"/>
        <dbReference type="ChEBI" id="CHEBI:17544"/>
        <dbReference type="EC" id="4.2.1.1"/>
    </reaction>
</comment>
<comment type="cofactor">
    <cofactor evidence="1">
        <name>Zn(2+)</name>
        <dbReference type="ChEBI" id="CHEBI:29105"/>
    </cofactor>
</comment>
<comment type="subcellular location">
    <subcellularLocation>
        <location evidence="1">Plastid</location>
        <location evidence="1">Chloroplast stroma</location>
    </subcellularLocation>
    <text evidence="1">Targeted to the chloroplast via a protein-targeting pathway that uses the secretory system.</text>
</comment>
<comment type="PTM">
    <text evidence="1">N-glycosylated.</text>
</comment>
<comment type="similarity">
    <text evidence="4">Belongs to the alpha-class carbonic anhydrase family.</text>
</comment>